<protein>
    <recommendedName>
        <fullName evidence="4">RecQ-mediated genome instability protein 2 homolog</fullName>
    </recommendedName>
    <alternativeName>
        <fullName evidence="3">RMI2 functional homolog 2</fullName>
    </alternativeName>
</protein>
<proteinExistence type="evidence at protein level"/>
<name>RMI2_CAEEL</name>
<evidence type="ECO:0000250" key="1">
    <source>
        <dbReference type="UniProtKB" id="Q96E14"/>
    </source>
</evidence>
<evidence type="ECO:0000269" key="2">
    <source>
    </source>
</evidence>
<evidence type="ECO:0000303" key="3">
    <source>
    </source>
</evidence>
<evidence type="ECO:0000305" key="4"/>
<evidence type="ECO:0000305" key="5">
    <source>
    </source>
</evidence>
<evidence type="ECO:0000312" key="6">
    <source>
        <dbReference type="Proteomes" id="UP000001940"/>
    </source>
</evidence>
<evidence type="ECO:0000312" key="7">
    <source>
        <dbReference type="WormBase" id="Y104H12D.4"/>
    </source>
</evidence>
<sequence length="107" mass="12006">MCDRDDCASIASRCTGETIICAFVESITPPKIRDKTGTYELKCPFAEGFTMEIGDLFLFHFVFDGSSEKCTRLTPIPKMLAMVYEKLLKDLRKAKKEGKMIISPTAN</sequence>
<accession>Q8MXU4</accession>
<dbReference type="EMBL" id="BX284604">
    <property type="protein sequence ID" value="CCD67731.1"/>
    <property type="molecule type" value="Genomic_DNA"/>
</dbReference>
<dbReference type="RefSeq" id="NP_001379821.1">
    <property type="nucleotide sequence ID" value="NM_001392254.1"/>
</dbReference>
<dbReference type="RefSeq" id="NP_741302.1">
    <property type="nucleotide sequence ID" value="NM_171253.3"/>
</dbReference>
<dbReference type="ComplexPortal" id="CPX-7361">
    <property type="entry name" value="BTR double Holliday Junction dissolution complex"/>
</dbReference>
<dbReference type="FunCoup" id="Q8MXU4">
    <property type="interactions" value="376"/>
</dbReference>
<dbReference type="STRING" id="6239.Y104H12D.4.1"/>
<dbReference type="PaxDb" id="6239-Y104H12D.4"/>
<dbReference type="EnsemblMetazoa" id="Y104H12D.4.1">
    <property type="protein sequence ID" value="Y104H12D.4.1"/>
    <property type="gene ID" value="WBGene00022428"/>
</dbReference>
<dbReference type="GeneID" id="176936"/>
<dbReference type="UCSC" id="Y104H12D.4">
    <property type="organism name" value="c. elegans"/>
</dbReference>
<dbReference type="AGR" id="WB:WBGene00022428"/>
<dbReference type="WormBase" id="Y104H12D.4">
    <property type="protein sequence ID" value="CE31633"/>
    <property type="gene ID" value="WBGene00022428"/>
    <property type="gene designation" value="rmif-2"/>
</dbReference>
<dbReference type="eggNOG" id="ENOG502TIES">
    <property type="taxonomic scope" value="Eukaryota"/>
</dbReference>
<dbReference type="HOGENOM" id="CLU_2199385_0_0_1"/>
<dbReference type="InParanoid" id="Q8MXU4"/>
<dbReference type="OMA" id="QTIICAY"/>
<dbReference type="OrthoDB" id="5822351at2759"/>
<dbReference type="PRO" id="PR:Q8MXU4"/>
<dbReference type="Proteomes" id="UP000001940">
    <property type="component" value="Chromosome IV"/>
</dbReference>
<dbReference type="Bgee" id="WBGene00022428">
    <property type="expression patterns" value="Expressed in embryo and 3 other cell types or tissues"/>
</dbReference>
<dbReference type="GO" id="GO:0005634">
    <property type="term" value="C:nucleus"/>
    <property type="evidence" value="ECO:0000314"/>
    <property type="project" value="UniProtKB"/>
</dbReference>
<dbReference type="GO" id="GO:0003677">
    <property type="term" value="F:DNA binding"/>
    <property type="evidence" value="ECO:0007669"/>
    <property type="project" value="UniProtKB-KW"/>
</dbReference>
<dbReference type="GO" id="GO:0051026">
    <property type="term" value="P:chiasma assembly"/>
    <property type="evidence" value="ECO:0000315"/>
    <property type="project" value="UniProtKB"/>
</dbReference>
<dbReference type="GO" id="GO:0006281">
    <property type="term" value="P:DNA repair"/>
    <property type="evidence" value="ECO:0007669"/>
    <property type="project" value="UniProtKB-KW"/>
</dbReference>
<dbReference type="GO" id="GO:0006260">
    <property type="term" value="P:DNA replication"/>
    <property type="evidence" value="ECO:0007669"/>
    <property type="project" value="UniProtKB-KW"/>
</dbReference>
<dbReference type="GO" id="GO:0090727">
    <property type="term" value="P:positive regulation of brood size"/>
    <property type="evidence" value="ECO:0000315"/>
    <property type="project" value="UniProtKB"/>
</dbReference>
<dbReference type="GO" id="GO:0040019">
    <property type="term" value="P:positive regulation of embryonic development"/>
    <property type="evidence" value="ECO:0000315"/>
    <property type="project" value="UniProtKB"/>
</dbReference>
<dbReference type="GO" id="GO:1905134">
    <property type="term" value="P:positive regulation of meiotic chromosome separation"/>
    <property type="evidence" value="ECO:0000315"/>
    <property type="project" value="UniProtKB"/>
</dbReference>
<dbReference type="GO" id="GO:0010845">
    <property type="term" value="P:positive regulation of reciprocal meiotic recombination"/>
    <property type="evidence" value="ECO:0000315"/>
    <property type="project" value="UniProtKB"/>
</dbReference>
<dbReference type="GO" id="GO:0034504">
    <property type="term" value="P:protein localization to nucleus"/>
    <property type="evidence" value="ECO:0000315"/>
    <property type="project" value="UniProtKB"/>
</dbReference>
<feature type="chain" id="PRO_0000455413" description="RecQ-mediated genome instability protein 2 homolog">
    <location>
        <begin position="1"/>
        <end position="107"/>
    </location>
</feature>
<gene>
    <name evidence="3 7" type="primary">rmif-2</name>
    <name evidence="7" type="ORF">Y104H12D.4</name>
</gene>
<organism evidence="6">
    <name type="scientific">Caenorhabditis elegans</name>
    <dbReference type="NCBI Taxonomy" id="6239"/>
    <lineage>
        <taxon>Eukaryota</taxon>
        <taxon>Metazoa</taxon>
        <taxon>Ecdysozoa</taxon>
        <taxon>Nematoda</taxon>
        <taxon>Chromadorea</taxon>
        <taxon>Rhabditida</taxon>
        <taxon>Rhabditina</taxon>
        <taxon>Rhabditomorpha</taxon>
        <taxon>Rhabditoidea</taxon>
        <taxon>Rhabditidae</taxon>
        <taxon>Peloderinae</taxon>
        <taxon>Caenorhabditis</taxon>
    </lineage>
</organism>
<reference evidence="6" key="1">
    <citation type="journal article" date="1998" name="Science">
        <title>Genome sequence of the nematode C. elegans: a platform for investigating biology.</title>
        <authorList>
            <consortium name="The C. elegans sequencing consortium"/>
        </authorList>
    </citation>
    <scope>NUCLEOTIDE SEQUENCE [LARGE SCALE GENOMIC DNA]</scope>
    <source>
        <strain evidence="6">Bristol N2</strain>
    </source>
</reference>
<reference evidence="4" key="2">
    <citation type="journal article" date="2021" name="PLoS Genet.">
        <title>Caenorhabditis elegans RMI2 functional homolog-2 (RMIF-2) and RMI1 (RMH-1) have both overlapping and distinct meiotic functions within the BTR complex.</title>
        <authorList>
            <person name="Velkova M."/>
            <person name="Silva N."/>
            <person name="Dello Stritto M.R."/>
            <person name="Schleiffer A."/>
            <person name="Barraud P."/>
            <person name="Hartl M."/>
            <person name="Jantsch V."/>
        </authorList>
    </citation>
    <scope>FUNCTION</scope>
    <scope>IDENTIFICATION IN BTR COMPLEX</scope>
    <scope>INTERACTION WITH RMH-1</scope>
    <scope>SUBCELLULAR LOCATION</scope>
    <scope>TISSUE SPECIFICITY</scope>
    <scope>DEVELOPMENTAL STAGE</scope>
    <scope>DISRUPTION PHENOTYPE</scope>
</reference>
<keyword id="KW-0227">DNA damage</keyword>
<keyword id="KW-0234">DNA repair</keyword>
<keyword id="KW-0235">DNA replication</keyword>
<keyword id="KW-0238">DNA-binding</keyword>
<keyword id="KW-0539">Nucleus</keyword>
<keyword id="KW-1185">Reference proteome</keyword>
<comment type="function">
    <text evidence="1 2 5">Essential component of the RMI complex, a complex that plays an important role in the processing of homologous recombination intermediates (By similarity). Component of the BTR double Holliday Junction dissolution complex, which is involved in homologous recombination during meiotic double strand break in the germline (Probable). Plays a role in double strand break repair by positively regulating the accumulation of rad-51 at double strand breaks (PubMed:34252074). Stabilizes and positively regulates the localization of the BTR double Holliday Junction dissolution complex components rmh-1, him-6 and top-3 at nuclear foci during meiotic recombination (PubMed:34252074). Positively regulates meiotic recombination, chiasma formation, and chromosome segregation in meiosis (PubMed:34252074). Positively regulates DNA crossover formation and positioning on chromosome arms (away from the chromosome center) during homologous recombination (PubMed:34252074).</text>
</comment>
<comment type="subunit">
    <text evidence="1 2 5">Component of the RMI complex, containing at least top-3, rmh-1 and rmh-2 (By similarity). Component of the BTR double Holliday Junction dissolution complex composed of at least him-6, top-3, rmh-1 and rmif-2, which is involved in double strand break repair in the germline (Probable). Interacts with rmh-1; the interaction is direct and is required for mutual stability and localization at nuclear foci (PubMed:34252074).</text>
</comment>
<comment type="subcellular location">
    <subcellularLocation>
        <location>Nucleus</location>
    </subcellularLocation>
    <text evidence="2">Co-localizes with rmh-1 in nuclei foci during pachytene in meiotic prophase I (PubMed:34252074). Localization at nuclear foci is dependent on rmh-1 during meiotic recombination (PubMed:34252074).</text>
</comment>
<comment type="tissue specificity">
    <text evidence="2">Expressed in the germline.</text>
</comment>
<comment type="developmental stage">
    <text evidence="2">First expressed in early pachynema nuclei during meiotic prophase I in the gonad (PubMed:34252074). Expression increases in throughout mid pachynema and decreases in the late stages of pachynema (PubMed:34252074).</text>
</comment>
<comment type="disruption phenotype">
    <text evidence="2">Embryonic lethality in 40% of animals, reduced brood size and high incidence of males phenotypes (PubMed:34252074). Presence of a mix of univalent and bivalent chromosomes during diakinesis, impaired double strand breaks and chiasma formation and defective chromosome segregation (PubMed:34252074). Delayed double break strand repair with an accumulation of rad-51-positive foci in early/mid pachynema in meiotic prophase I during meiotic recombination (PubMed:34252074). Delayed accumulation of cosa-1-positive and msh-5-positive foci at recombination foci (composed of crossover and non-crossover DNA intermediates) in late pachynema indicative of a decreased efficiency in crossover designation (PubMed:34252074). Increased number of crossover events and impaired positioning of crossovers on chromosome arms during homologous recombination (PubMed:34252074). Animals have an extended mitotic zone (PubMed:34252074). Abolishes localization of rmh-1 to nuclear foci, and instead rmh-1 is localized in the cytoplasm (PubMed:34252074). Impairs the localization of him-6 to nuclear foci during pachynema (PubMed:34252074).</text>
</comment>
<comment type="similarity">
    <text evidence="4">Belongs to the RMI2 family.</text>
</comment>